<accession>Q1R971</accession>
<gene>
    <name evidence="1" type="primary">fadI</name>
    <name type="ordered locus">UTI89_C2626</name>
</gene>
<comment type="function">
    <text evidence="1">Catalyzes the final step of fatty acid oxidation in which acetyl-CoA is released and the CoA ester of a fatty acid two carbons shorter is formed.</text>
</comment>
<comment type="catalytic activity">
    <reaction evidence="1">
        <text>an acyl-CoA + acetyl-CoA = a 3-oxoacyl-CoA + CoA</text>
        <dbReference type="Rhea" id="RHEA:21564"/>
        <dbReference type="ChEBI" id="CHEBI:57287"/>
        <dbReference type="ChEBI" id="CHEBI:57288"/>
        <dbReference type="ChEBI" id="CHEBI:58342"/>
        <dbReference type="ChEBI" id="CHEBI:90726"/>
        <dbReference type="EC" id="2.3.1.16"/>
    </reaction>
</comment>
<comment type="pathway">
    <text evidence="1">Lipid metabolism; fatty acid beta-oxidation.</text>
</comment>
<comment type="subunit">
    <text evidence="1">Heterotetramer of two alpha chains (FadJ) and two beta chains (FadI).</text>
</comment>
<comment type="subcellular location">
    <subcellularLocation>
        <location evidence="1">Cytoplasm</location>
    </subcellularLocation>
</comment>
<comment type="similarity">
    <text evidence="1">Belongs to the thiolase-like superfamily. Thiolase family.</text>
</comment>
<protein>
    <recommendedName>
        <fullName evidence="1">3-ketoacyl-CoA thiolase</fullName>
        <ecNumber evidence="1">2.3.1.16</ecNumber>
    </recommendedName>
    <alternativeName>
        <fullName evidence="1">ACSs</fullName>
    </alternativeName>
    <alternativeName>
        <fullName evidence="1">Acetyl-CoA acyltransferase</fullName>
    </alternativeName>
    <alternativeName>
        <fullName evidence="1">Acyl-CoA ligase</fullName>
    </alternativeName>
    <alternativeName>
        <fullName evidence="1">Beta-ketothiolase</fullName>
    </alternativeName>
    <alternativeName>
        <fullName evidence="1">Fatty acid oxidation complex subunit beta</fullName>
    </alternativeName>
</protein>
<name>FADI_ECOUT</name>
<dbReference type="EC" id="2.3.1.16" evidence="1"/>
<dbReference type="EMBL" id="CP000243">
    <property type="protein sequence ID" value="ABE08093.1"/>
    <property type="molecule type" value="Genomic_DNA"/>
</dbReference>
<dbReference type="RefSeq" id="WP_000531977.1">
    <property type="nucleotide sequence ID" value="NZ_CP064825.1"/>
</dbReference>
<dbReference type="SMR" id="Q1R971"/>
<dbReference type="KEGG" id="eci:UTI89_C2626"/>
<dbReference type="HOGENOM" id="CLU_031026_2_0_6"/>
<dbReference type="UniPathway" id="UPA00659"/>
<dbReference type="Proteomes" id="UP000001952">
    <property type="component" value="Chromosome"/>
</dbReference>
<dbReference type="GO" id="GO:0005829">
    <property type="term" value="C:cytosol"/>
    <property type="evidence" value="ECO:0007669"/>
    <property type="project" value="TreeGrafter"/>
</dbReference>
<dbReference type="GO" id="GO:0003988">
    <property type="term" value="F:acetyl-CoA C-acyltransferase activity"/>
    <property type="evidence" value="ECO:0007669"/>
    <property type="project" value="UniProtKB-UniRule"/>
</dbReference>
<dbReference type="GO" id="GO:0006635">
    <property type="term" value="P:fatty acid beta-oxidation"/>
    <property type="evidence" value="ECO:0007669"/>
    <property type="project" value="UniProtKB-UniRule"/>
</dbReference>
<dbReference type="CDD" id="cd00751">
    <property type="entry name" value="thiolase"/>
    <property type="match status" value="1"/>
</dbReference>
<dbReference type="FunFam" id="3.40.47.10:FF:000011">
    <property type="entry name" value="3-ketoacyl-CoA thiolase"/>
    <property type="match status" value="1"/>
</dbReference>
<dbReference type="Gene3D" id="3.40.47.10">
    <property type="match status" value="1"/>
</dbReference>
<dbReference type="HAMAP" id="MF_01618">
    <property type="entry name" value="FadI"/>
    <property type="match status" value="1"/>
</dbReference>
<dbReference type="InterPro" id="IPR012806">
    <property type="entry name" value="Ac-CoA_C-AcTrfase_FadI"/>
</dbReference>
<dbReference type="InterPro" id="IPR002155">
    <property type="entry name" value="Thiolase"/>
</dbReference>
<dbReference type="InterPro" id="IPR016039">
    <property type="entry name" value="Thiolase-like"/>
</dbReference>
<dbReference type="InterPro" id="IPR020615">
    <property type="entry name" value="Thiolase_acyl_enz_int_AS"/>
</dbReference>
<dbReference type="InterPro" id="IPR020610">
    <property type="entry name" value="Thiolase_AS"/>
</dbReference>
<dbReference type="InterPro" id="IPR020617">
    <property type="entry name" value="Thiolase_C"/>
</dbReference>
<dbReference type="InterPro" id="IPR020613">
    <property type="entry name" value="Thiolase_CS"/>
</dbReference>
<dbReference type="InterPro" id="IPR020616">
    <property type="entry name" value="Thiolase_N"/>
</dbReference>
<dbReference type="NCBIfam" id="TIGR01930">
    <property type="entry name" value="AcCoA-C-Actrans"/>
    <property type="match status" value="1"/>
</dbReference>
<dbReference type="NCBIfam" id="TIGR02446">
    <property type="entry name" value="FadI"/>
    <property type="match status" value="1"/>
</dbReference>
<dbReference type="NCBIfam" id="NF006516">
    <property type="entry name" value="PRK08963.1"/>
    <property type="match status" value="1"/>
</dbReference>
<dbReference type="PANTHER" id="PTHR18919:SF107">
    <property type="entry name" value="ACETYL-COA ACETYLTRANSFERASE, CYTOSOLIC"/>
    <property type="match status" value="1"/>
</dbReference>
<dbReference type="PANTHER" id="PTHR18919">
    <property type="entry name" value="ACETYL-COA C-ACYLTRANSFERASE"/>
    <property type="match status" value="1"/>
</dbReference>
<dbReference type="Pfam" id="PF02803">
    <property type="entry name" value="Thiolase_C"/>
    <property type="match status" value="1"/>
</dbReference>
<dbReference type="Pfam" id="PF00108">
    <property type="entry name" value="Thiolase_N"/>
    <property type="match status" value="1"/>
</dbReference>
<dbReference type="PIRSF" id="PIRSF000429">
    <property type="entry name" value="Ac-CoA_Ac_transf"/>
    <property type="match status" value="1"/>
</dbReference>
<dbReference type="SUPFAM" id="SSF53901">
    <property type="entry name" value="Thiolase-like"/>
    <property type="match status" value="2"/>
</dbReference>
<dbReference type="PROSITE" id="PS00098">
    <property type="entry name" value="THIOLASE_1"/>
    <property type="match status" value="1"/>
</dbReference>
<dbReference type="PROSITE" id="PS00737">
    <property type="entry name" value="THIOLASE_2"/>
    <property type="match status" value="1"/>
</dbReference>
<dbReference type="PROSITE" id="PS00099">
    <property type="entry name" value="THIOLASE_3"/>
    <property type="match status" value="1"/>
</dbReference>
<keyword id="KW-0012">Acyltransferase</keyword>
<keyword id="KW-0963">Cytoplasm</keyword>
<keyword id="KW-0276">Fatty acid metabolism</keyword>
<keyword id="KW-0442">Lipid degradation</keyword>
<keyword id="KW-0443">Lipid metabolism</keyword>
<keyword id="KW-0808">Transferase</keyword>
<feature type="chain" id="PRO_1000069499" description="3-ketoacyl-CoA thiolase">
    <location>
        <begin position="1"/>
        <end position="436"/>
    </location>
</feature>
<feature type="active site" description="Acyl-thioester intermediate" evidence="1">
    <location>
        <position position="99"/>
    </location>
</feature>
<feature type="active site" description="Proton acceptor" evidence="1">
    <location>
        <position position="392"/>
    </location>
</feature>
<feature type="active site" description="Proton acceptor" evidence="1">
    <location>
        <position position="422"/>
    </location>
</feature>
<sequence length="436" mass="46557">MGQVLPLVTRQGDRIAIVSGLRTPFARQATAFHGIPAVDLGKMVVGELLARTEIPAEVIEQLVFGQVVQMPEAPNIAREIVLGTGMNVHTDAYSVSRACATSFQAVANVAESLMAGTIRAGIAGGADSSSVLPIGVSKKLARVLVDVNKARTMSQRLKLFSRLRLRDLMPVPPAVAEYSTGLRMGDTAEQMAKTYGITREQQDALAHRSHQRAAQAWSEGKLKEEVMTAFIPPYKQPLVEDNNIRGNSSLADYAKLRPAFDRKHGTVTAANSTPLTDGAAAVILMTESRAKELGLVPLGYLRSYAFTAIDVWQDMLLGPAWSTPLALERAGLTMGDLTLIDMHEAFAAQTLANIQLLGSERFARDVLGRAHATGEVDESKFNVLGGSIAYGHPFAATGARMITQTLHELRRRGGGFGLVTACAAGGLGAAMVLEAE</sequence>
<evidence type="ECO:0000255" key="1">
    <source>
        <dbReference type="HAMAP-Rule" id="MF_01618"/>
    </source>
</evidence>
<reference key="1">
    <citation type="journal article" date="2006" name="Proc. Natl. Acad. Sci. U.S.A.">
        <title>Identification of genes subject to positive selection in uropathogenic strains of Escherichia coli: a comparative genomics approach.</title>
        <authorList>
            <person name="Chen S.L."/>
            <person name="Hung C.-S."/>
            <person name="Xu J."/>
            <person name="Reigstad C.S."/>
            <person name="Magrini V."/>
            <person name="Sabo A."/>
            <person name="Blasiar D."/>
            <person name="Bieri T."/>
            <person name="Meyer R.R."/>
            <person name="Ozersky P."/>
            <person name="Armstrong J.R."/>
            <person name="Fulton R.S."/>
            <person name="Latreille J.P."/>
            <person name="Spieth J."/>
            <person name="Hooton T.M."/>
            <person name="Mardis E.R."/>
            <person name="Hultgren S.J."/>
            <person name="Gordon J.I."/>
        </authorList>
    </citation>
    <scope>NUCLEOTIDE SEQUENCE [LARGE SCALE GENOMIC DNA]</scope>
    <source>
        <strain>UTI89 / UPEC</strain>
    </source>
</reference>
<organism>
    <name type="scientific">Escherichia coli (strain UTI89 / UPEC)</name>
    <dbReference type="NCBI Taxonomy" id="364106"/>
    <lineage>
        <taxon>Bacteria</taxon>
        <taxon>Pseudomonadati</taxon>
        <taxon>Pseudomonadota</taxon>
        <taxon>Gammaproteobacteria</taxon>
        <taxon>Enterobacterales</taxon>
        <taxon>Enterobacteriaceae</taxon>
        <taxon>Escherichia</taxon>
    </lineage>
</organism>
<proteinExistence type="inferred from homology"/>